<feature type="chain" id="PRO_0000157275" description="Preprotein translocase subunit SecG">
    <location>
        <begin position="1"/>
        <end position="56"/>
    </location>
</feature>
<feature type="topological domain" description="Cytoplasmic" evidence="1">
    <location>
        <begin position="1"/>
        <end position="29"/>
    </location>
</feature>
<feature type="transmembrane region" description="Helical" evidence="1">
    <location>
        <begin position="30"/>
        <end position="49"/>
    </location>
</feature>
<feature type="topological domain" description="Extracellular" evidence="1">
    <location>
        <begin position="50"/>
        <end position="56"/>
    </location>
</feature>
<evidence type="ECO:0000250" key="1"/>
<evidence type="ECO:0000305" key="2"/>
<name>SECG_PYRFU</name>
<proteinExistence type="inferred from homology"/>
<keyword id="KW-1003">Cell membrane</keyword>
<keyword id="KW-0472">Membrane</keyword>
<keyword id="KW-0653">Protein transport</keyword>
<keyword id="KW-1185">Reference proteome</keyword>
<keyword id="KW-0811">Translocation</keyword>
<keyword id="KW-0812">Transmembrane</keyword>
<keyword id="KW-1133">Transmembrane helix</keyword>
<keyword id="KW-0813">Transport</keyword>
<comment type="function">
    <text evidence="1">Involved in protein export. The function of the beta subunit is unknown, but it may be involved in stabilization of the trimeric complex (By similarity).</text>
</comment>
<comment type="subunit">
    <text evidence="1">Component of the protein translocase complex. Heterotrimer consisting of alpha (SecY), beta (SecG) and gamma (SecE) subunits. Can form oligomers of the heterotrimer (By similarity).</text>
</comment>
<comment type="subcellular location">
    <subcellularLocation>
        <location evidence="1">Cell membrane</location>
        <topology evidence="1">Single-pass membrane protein</topology>
    </subcellularLocation>
</comment>
<comment type="similarity">
    <text evidence="2">Belongs to the SEC61-beta family.</text>
</comment>
<accession>Q8TZH7</accession>
<organism>
    <name type="scientific">Pyrococcus furiosus (strain ATCC 43587 / DSM 3638 / JCM 8422 / Vc1)</name>
    <dbReference type="NCBI Taxonomy" id="186497"/>
    <lineage>
        <taxon>Archaea</taxon>
        <taxon>Methanobacteriati</taxon>
        <taxon>Methanobacteriota</taxon>
        <taxon>Thermococci</taxon>
        <taxon>Thermococcales</taxon>
        <taxon>Thermococcaceae</taxon>
        <taxon>Pyrococcus</taxon>
    </lineage>
</organism>
<protein>
    <recommendedName>
        <fullName>Preprotein translocase subunit SecG</fullName>
    </recommendedName>
    <alternativeName>
        <fullName>Protein transport protein Sec61 subunit beta homolog</fullName>
    </alternativeName>
</protein>
<sequence length="56" mass="6069">MAKEKTTLPPTGAGLMRFFDEDTKAVKVTPKGALAIVLVFILIEVLLQIIGPRIFG</sequence>
<reference key="1">
    <citation type="journal article" date="1999" name="Genetics">
        <title>Divergence of the hyperthermophilic archaea Pyrococcus furiosus and P. horikoshii inferred from complete genomic sequences.</title>
        <authorList>
            <person name="Maeder D.L."/>
            <person name="Weiss R.B."/>
            <person name="Dunn D.M."/>
            <person name="Cherry J.L."/>
            <person name="Gonzalez J.M."/>
            <person name="DiRuggiero J."/>
            <person name="Robb F.T."/>
        </authorList>
    </citation>
    <scope>NUCLEOTIDE SEQUENCE [LARGE SCALE GENOMIC DNA]</scope>
    <source>
        <strain>ATCC 43587 / DSM 3638 / JCM 8422 / Vc1</strain>
    </source>
</reference>
<dbReference type="EMBL" id="AE009950">
    <property type="protein sequence ID" value="AAL82140.1"/>
    <property type="molecule type" value="Genomic_DNA"/>
</dbReference>
<dbReference type="RefSeq" id="WP_011013161.1">
    <property type="nucleotide sequence ID" value="NZ_CP023154.1"/>
</dbReference>
<dbReference type="SMR" id="Q8TZH7"/>
<dbReference type="DIP" id="DIP-59390N"/>
<dbReference type="IntAct" id="Q8TZH7">
    <property type="interactions" value="2"/>
</dbReference>
<dbReference type="STRING" id="186497.PF2016"/>
<dbReference type="TCDB" id="3.A.5.7.2">
    <property type="family name" value="the general secretory pathway (sec) family"/>
</dbReference>
<dbReference type="PaxDb" id="186497-PF2016"/>
<dbReference type="KEGG" id="pfu:PF2016"/>
<dbReference type="PATRIC" id="fig|186497.12.peg.2093"/>
<dbReference type="eggNOG" id="arCOG02957">
    <property type="taxonomic scope" value="Archaea"/>
</dbReference>
<dbReference type="HOGENOM" id="CLU_208205_3_1_2"/>
<dbReference type="OrthoDB" id="43651at2157"/>
<dbReference type="PhylomeDB" id="Q8TZH7"/>
<dbReference type="Proteomes" id="UP000001013">
    <property type="component" value="Chromosome"/>
</dbReference>
<dbReference type="GO" id="GO:0005886">
    <property type="term" value="C:plasma membrane"/>
    <property type="evidence" value="ECO:0007669"/>
    <property type="project" value="UniProtKB-SubCell"/>
</dbReference>
<dbReference type="GO" id="GO:0015031">
    <property type="term" value="P:protein transport"/>
    <property type="evidence" value="ECO:0007669"/>
    <property type="project" value="UniProtKB-UniRule"/>
</dbReference>
<dbReference type="HAMAP" id="MF_00751">
    <property type="entry name" value="SecG"/>
    <property type="match status" value="1"/>
</dbReference>
<dbReference type="InterPro" id="IPR023531">
    <property type="entry name" value="Preprot_translocase_SecG"/>
</dbReference>
<dbReference type="InterPro" id="IPR016482">
    <property type="entry name" value="SecG/Sec61-beta/Sbh"/>
</dbReference>
<dbReference type="NCBIfam" id="NF002318">
    <property type="entry name" value="PRK01253.1"/>
    <property type="match status" value="1"/>
</dbReference>
<dbReference type="Pfam" id="PF03911">
    <property type="entry name" value="Sec61_beta"/>
    <property type="match status" value="1"/>
</dbReference>
<gene>
    <name type="primary">secG</name>
    <name type="ordered locus">PF2016</name>
</gene>